<organism>
    <name type="scientific">Lacticaseibacillus casei (strain BL23)</name>
    <name type="common">Lactobacillus casei</name>
    <dbReference type="NCBI Taxonomy" id="543734"/>
    <lineage>
        <taxon>Bacteria</taxon>
        <taxon>Bacillati</taxon>
        <taxon>Bacillota</taxon>
        <taxon>Bacilli</taxon>
        <taxon>Lactobacillales</taxon>
        <taxon>Lactobacillaceae</taxon>
        <taxon>Lacticaseibacillus</taxon>
    </lineage>
</organism>
<feature type="chain" id="PRO_1000189495" description="Cell cycle protein GpsB">
    <location>
        <begin position="1"/>
        <end position="131"/>
    </location>
</feature>
<feature type="region of interest" description="Disordered" evidence="2">
    <location>
        <begin position="111"/>
        <end position="131"/>
    </location>
</feature>
<feature type="coiled-coil region" evidence="1">
    <location>
        <begin position="39"/>
        <end position="76"/>
    </location>
</feature>
<feature type="compositionally biased region" description="Basic and acidic residues" evidence="2">
    <location>
        <begin position="117"/>
        <end position="131"/>
    </location>
</feature>
<name>GPSB_LACCB</name>
<sequence length="131" mass="15051">MDSNKETKFSIQYGPKDILDKKFKNKVRGYDPDEVDEFLDGIIRDYEAFTNEIDRLKEENTKLFSRVDELTKQLSVSKNVSAQTPQTNAAATNYDILKRLSNLERHVFGSKLSDSSVDNHDDGNHSDVDQY</sequence>
<comment type="function">
    <text evidence="1">Divisome component that associates with the complex late in its assembly, after the Z-ring is formed, and is dependent on DivIC and PBP2B for its recruitment to the divisome. Together with EzrA, is a key component of the system that regulates PBP1 localization during cell cycle progression. Its main role could be the removal of PBP1 from the cell pole after pole maturation is completed. Also contributes to the recruitment of PBP1 to the division complex. Not essential for septum formation.</text>
</comment>
<comment type="subunit">
    <text evidence="1">Forms polymers through the coiled coil domains. Interacts with PBP1, MreC and EzrA.</text>
</comment>
<comment type="subcellular location">
    <subcellularLocation>
        <location evidence="1">Cytoplasm</location>
    </subcellularLocation>
    <text evidence="1">Shuttles between the lateral wall and the division site in a cell cycle-dependent manner.</text>
</comment>
<comment type="similarity">
    <text evidence="1">Belongs to the GpsB family.</text>
</comment>
<reference key="1">
    <citation type="submission" date="2008-06" db="EMBL/GenBank/DDBJ databases">
        <title>Lactobacillus casei BL23 complete genome sequence.</title>
        <authorList>
            <person name="Maze A."/>
            <person name="Boel G."/>
            <person name="Bourand A."/>
            <person name="Loux V."/>
            <person name="Gibrat J.F."/>
            <person name="Zuniga M."/>
            <person name="Hartke A."/>
            <person name="Deutscher J."/>
        </authorList>
    </citation>
    <scope>NUCLEOTIDE SEQUENCE [LARGE SCALE GENOMIC DNA]</scope>
    <source>
        <strain>BL23</strain>
    </source>
</reference>
<keyword id="KW-0131">Cell cycle</keyword>
<keyword id="KW-0132">Cell division</keyword>
<keyword id="KW-0133">Cell shape</keyword>
<keyword id="KW-0175">Coiled coil</keyword>
<keyword id="KW-0963">Cytoplasm</keyword>
<dbReference type="EMBL" id="FM177140">
    <property type="protein sequence ID" value="CAQ66781.1"/>
    <property type="molecule type" value="Genomic_DNA"/>
</dbReference>
<dbReference type="SMR" id="B3WEI0"/>
<dbReference type="KEGG" id="lcb:LCABL_17000"/>
<dbReference type="HOGENOM" id="CLU_140309_1_0_9"/>
<dbReference type="GO" id="GO:0005737">
    <property type="term" value="C:cytoplasm"/>
    <property type="evidence" value="ECO:0007669"/>
    <property type="project" value="UniProtKB-SubCell"/>
</dbReference>
<dbReference type="GO" id="GO:0051301">
    <property type="term" value="P:cell division"/>
    <property type="evidence" value="ECO:0007669"/>
    <property type="project" value="UniProtKB-UniRule"/>
</dbReference>
<dbReference type="GO" id="GO:0008360">
    <property type="term" value="P:regulation of cell shape"/>
    <property type="evidence" value="ECO:0007669"/>
    <property type="project" value="UniProtKB-UniRule"/>
</dbReference>
<dbReference type="Gene3D" id="6.10.250.660">
    <property type="match status" value="1"/>
</dbReference>
<dbReference type="HAMAP" id="MF_02011">
    <property type="entry name" value="GpsB"/>
    <property type="match status" value="1"/>
</dbReference>
<dbReference type="InterPro" id="IPR011229">
    <property type="entry name" value="Cell_cycle_GpsB"/>
</dbReference>
<dbReference type="InterPro" id="IPR019933">
    <property type="entry name" value="DivIVA_domain"/>
</dbReference>
<dbReference type="InterPro" id="IPR007793">
    <property type="entry name" value="DivIVA_fam"/>
</dbReference>
<dbReference type="NCBIfam" id="TIGR03544">
    <property type="entry name" value="DivI1A_domain"/>
    <property type="match status" value="1"/>
</dbReference>
<dbReference type="NCBIfam" id="NF010725">
    <property type="entry name" value="PRK14127.1"/>
    <property type="match status" value="1"/>
</dbReference>
<dbReference type="PANTHER" id="PTHR35794:SF1">
    <property type="entry name" value="CELL CYCLE PROTEIN GPSB"/>
    <property type="match status" value="1"/>
</dbReference>
<dbReference type="PANTHER" id="PTHR35794">
    <property type="entry name" value="CELL DIVISION PROTEIN DIVIVA"/>
    <property type="match status" value="1"/>
</dbReference>
<dbReference type="Pfam" id="PF05103">
    <property type="entry name" value="DivIVA"/>
    <property type="match status" value="1"/>
</dbReference>
<dbReference type="PIRSF" id="PIRSF029938">
    <property type="entry name" value="UCP029938"/>
    <property type="match status" value="1"/>
</dbReference>
<evidence type="ECO:0000255" key="1">
    <source>
        <dbReference type="HAMAP-Rule" id="MF_02011"/>
    </source>
</evidence>
<evidence type="ECO:0000256" key="2">
    <source>
        <dbReference type="SAM" id="MobiDB-lite"/>
    </source>
</evidence>
<accession>B3WEI0</accession>
<gene>
    <name evidence="1" type="primary">gpsB</name>
    <name type="ordered locus">LCABL_17000</name>
</gene>
<proteinExistence type="inferred from homology"/>
<protein>
    <recommendedName>
        <fullName evidence="1">Cell cycle protein GpsB</fullName>
    </recommendedName>
    <alternativeName>
        <fullName evidence="1">Guiding PBP1-shuttling protein</fullName>
    </alternativeName>
</protein>